<evidence type="ECO:0000255" key="1">
    <source>
        <dbReference type="HAMAP-Rule" id="MF_00178"/>
    </source>
</evidence>
<proteinExistence type="inferred from homology"/>
<protein>
    <recommendedName>
        <fullName evidence="1">6,7-dimethyl-8-ribityllumazine synthase</fullName>
        <shortName evidence="1">DMRL synthase</shortName>
        <shortName evidence="1">LS</shortName>
        <shortName evidence="1">Lumazine synthase</shortName>
        <ecNumber evidence="1">2.5.1.78</ecNumber>
    </recommendedName>
</protein>
<keyword id="KW-1185">Reference proteome</keyword>
<keyword id="KW-0686">Riboflavin biosynthesis</keyword>
<keyword id="KW-0808">Transferase</keyword>
<sequence>MKLIEGQLKVVNGKKVAIVSTRWNHFIVDRLVEGAKDAFARHGGDEADLTHVLVPGAFELPMIIDKLLASGKYDAICALGAVIRGATPHFDYVSAEATKGIAMMSLKHQKPVSFGLLTTDNIEQSIERAGTKAGNKGFEAMTVVIEMLDLYENL</sequence>
<reference key="1">
    <citation type="journal article" date="2008" name="Appl. Environ. Microbiol.">
        <title>Genome of the epsilonproteobacterial chemolithoautotroph Sulfurimonas denitrificans.</title>
        <authorList>
            <person name="Sievert S.M."/>
            <person name="Scott K.M."/>
            <person name="Klotz M.G."/>
            <person name="Chain P.S.G."/>
            <person name="Hauser L.J."/>
            <person name="Hemp J."/>
            <person name="Huegler M."/>
            <person name="Land M."/>
            <person name="Lapidus A."/>
            <person name="Larimer F.W."/>
            <person name="Lucas S."/>
            <person name="Malfatti S.A."/>
            <person name="Meyer F."/>
            <person name="Paulsen I.T."/>
            <person name="Ren Q."/>
            <person name="Simon J."/>
            <person name="Bailey K."/>
            <person name="Diaz E."/>
            <person name="Fitzpatrick K.A."/>
            <person name="Glover B."/>
            <person name="Gwatney N."/>
            <person name="Korajkic A."/>
            <person name="Long A."/>
            <person name="Mobberley J.M."/>
            <person name="Pantry S.N."/>
            <person name="Pazder G."/>
            <person name="Peterson S."/>
            <person name="Quintanilla J.D."/>
            <person name="Sprinkle R."/>
            <person name="Stephens J."/>
            <person name="Thomas P."/>
            <person name="Vaughn R."/>
            <person name="Weber M.J."/>
            <person name="Wooten L.L."/>
        </authorList>
    </citation>
    <scope>NUCLEOTIDE SEQUENCE [LARGE SCALE GENOMIC DNA]</scope>
    <source>
        <strain>ATCC 33889 / DSM 1251</strain>
    </source>
</reference>
<accession>Q30TJ8</accession>
<feature type="chain" id="PRO_1000040543" description="6,7-dimethyl-8-ribityllumazine synthase">
    <location>
        <begin position="1"/>
        <end position="154"/>
    </location>
</feature>
<feature type="active site" description="Proton donor" evidence="1">
    <location>
        <position position="89"/>
    </location>
</feature>
<feature type="binding site" evidence="1">
    <location>
        <position position="23"/>
    </location>
    <ligand>
        <name>5-amino-6-(D-ribitylamino)uracil</name>
        <dbReference type="ChEBI" id="CHEBI:15934"/>
    </ligand>
</feature>
<feature type="binding site" evidence="1">
    <location>
        <begin position="57"/>
        <end position="59"/>
    </location>
    <ligand>
        <name>5-amino-6-(D-ribitylamino)uracil</name>
        <dbReference type="ChEBI" id="CHEBI:15934"/>
    </ligand>
</feature>
<feature type="binding site" evidence="1">
    <location>
        <begin position="81"/>
        <end position="83"/>
    </location>
    <ligand>
        <name>5-amino-6-(D-ribitylamino)uracil</name>
        <dbReference type="ChEBI" id="CHEBI:15934"/>
    </ligand>
</feature>
<feature type="binding site" evidence="1">
    <location>
        <begin position="86"/>
        <end position="87"/>
    </location>
    <ligand>
        <name>(2S)-2-hydroxy-3-oxobutyl phosphate</name>
        <dbReference type="ChEBI" id="CHEBI:58830"/>
    </ligand>
</feature>
<feature type="binding site" evidence="1">
    <location>
        <position position="114"/>
    </location>
    <ligand>
        <name>5-amino-6-(D-ribitylamino)uracil</name>
        <dbReference type="ChEBI" id="CHEBI:15934"/>
    </ligand>
</feature>
<feature type="binding site" evidence="1">
    <location>
        <position position="128"/>
    </location>
    <ligand>
        <name>(2S)-2-hydroxy-3-oxobutyl phosphate</name>
        <dbReference type="ChEBI" id="CHEBI:58830"/>
    </ligand>
</feature>
<name>RISB_SULDN</name>
<organism>
    <name type="scientific">Sulfurimonas denitrificans (strain ATCC 33889 / DSM 1251)</name>
    <name type="common">Thiomicrospira denitrificans (strain ATCC 33889 / DSM 1251)</name>
    <dbReference type="NCBI Taxonomy" id="326298"/>
    <lineage>
        <taxon>Bacteria</taxon>
        <taxon>Pseudomonadati</taxon>
        <taxon>Campylobacterota</taxon>
        <taxon>Epsilonproteobacteria</taxon>
        <taxon>Campylobacterales</taxon>
        <taxon>Sulfurimonadaceae</taxon>
        <taxon>Sulfurimonas</taxon>
    </lineage>
</organism>
<dbReference type="EC" id="2.5.1.78" evidence="1"/>
<dbReference type="EMBL" id="CP000153">
    <property type="protein sequence ID" value="ABB43683.1"/>
    <property type="molecule type" value="Genomic_DNA"/>
</dbReference>
<dbReference type="RefSeq" id="WP_011372037.1">
    <property type="nucleotide sequence ID" value="NC_007575.1"/>
</dbReference>
<dbReference type="SMR" id="Q30TJ8"/>
<dbReference type="STRING" id="326298.Suden_0402"/>
<dbReference type="KEGG" id="tdn:Suden_0402"/>
<dbReference type="eggNOG" id="COG0054">
    <property type="taxonomic scope" value="Bacteria"/>
</dbReference>
<dbReference type="HOGENOM" id="CLU_089358_1_1_7"/>
<dbReference type="OrthoDB" id="9809709at2"/>
<dbReference type="UniPathway" id="UPA00275">
    <property type="reaction ID" value="UER00404"/>
</dbReference>
<dbReference type="Proteomes" id="UP000002714">
    <property type="component" value="Chromosome"/>
</dbReference>
<dbReference type="GO" id="GO:0005829">
    <property type="term" value="C:cytosol"/>
    <property type="evidence" value="ECO:0007669"/>
    <property type="project" value="TreeGrafter"/>
</dbReference>
<dbReference type="GO" id="GO:0009349">
    <property type="term" value="C:riboflavin synthase complex"/>
    <property type="evidence" value="ECO:0007669"/>
    <property type="project" value="InterPro"/>
</dbReference>
<dbReference type="GO" id="GO:0000906">
    <property type="term" value="F:6,7-dimethyl-8-ribityllumazine synthase activity"/>
    <property type="evidence" value="ECO:0007669"/>
    <property type="project" value="UniProtKB-UniRule"/>
</dbReference>
<dbReference type="GO" id="GO:0009231">
    <property type="term" value="P:riboflavin biosynthetic process"/>
    <property type="evidence" value="ECO:0007669"/>
    <property type="project" value="UniProtKB-UniRule"/>
</dbReference>
<dbReference type="CDD" id="cd09209">
    <property type="entry name" value="Lumazine_synthase-I"/>
    <property type="match status" value="1"/>
</dbReference>
<dbReference type="FunFam" id="3.40.50.960:FF:000001">
    <property type="entry name" value="6,7-dimethyl-8-ribityllumazine synthase"/>
    <property type="match status" value="1"/>
</dbReference>
<dbReference type="Gene3D" id="3.40.50.960">
    <property type="entry name" value="Lumazine/riboflavin synthase"/>
    <property type="match status" value="1"/>
</dbReference>
<dbReference type="HAMAP" id="MF_00178">
    <property type="entry name" value="Lumazine_synth"/>
    <property type="match status" value="1"/>
</dbReference>
<dbReference type="InterPro" id="IPR034964">
    <property type="entry name" value="LS"/>
</dbReference>
<dbReference type="InterPro" id="IPR002180">
    <property type="entry name" value="LS/RS"/>
</dbReference>
<dbReference type="InterPro" id="IPR036467">
    <property type="entry name" value="LS/RS_sf"/>
</dbReference>
<dbReference type="NCBIfam" id="TIGR00114">
    <property type="entry name" value="lumazine-synth"/>
    <property type="match status" value="1"/>
</dbReference>
<dbReference type="PANTHER" id="PTHR21058:SF0">
    <property type="entry name" value="6,7-DIMETHYL-8-RIBITYLLUMAZINE SYNTHASE"/>
    <property type="match status" value="1"/>
</dbReference>
<dbReference type="PANTHER" id="PTHR21058">
    <property type="entry name" value="6,7-DIMETHYL-8-RIBITYLLUMAZINE SYNTHASE DMRL SYNTHASE LUMAZINE SYNTHASE"/>
    <property type="match status" value="1"/>
</dbReference>
<dbReference type="Pfam" id="PF00885">
    <property type="entry name" value="DMRL_synthase"/>
    <property type="match status" value="1"/>
</dbReference>
<dbReference type="SUPFAM" id="SSF52121">
    <property type="entry name" value="Lumazine synthase"/>
    <property type="match status" value="1"/>
</dbReference>
<gene>
    <name evidence="1" type="primary">ribH</name>
    <name type="ordered locus">Suden_0402</name>
</gene>
<comment type="function">
    <text evidence="1">Catalyzes the formation of 6,7-dimethyl-8-ribityllumazine by condensation of 5-amino-6-(D-ribitylamino)uracil with 3,4-dihydroxy-2-butanone 4-phosphate. This is the penultimate step in the biosynthesis of riboflavin.</text>
</comment>
<comment type="catalytic activity">
    <reaction evidence="1">
        <text>(2S)-2-hydroxy-3-oxobutyl phosphate + 5-amino-6-(D-ribitylamino)uracil = 6,7-dimethyl-8-(1-D-ribityl)lumazine + phosphate + 2 H2O + H(+)</text>
        <dbReference type="Rhea" id="RHEA:26152"/>
        <dbReference type="ChEBI" id="CHEBI:15377"/>
        <dbReference type="ChEBI" id="CHEBI:15378"/>
        <dbReference type="ChEBI" id="CHEBI:15934"/>
        <dbReference type="ChEBI" id="CHEBI:43474"/>
        <dbReference type="ChEBI" id="CHEBI:58201"/>
        <dbReference type="ChEBI" id="CHEBI:58830"/>
        <dbReference type="EC" id="2.5.1.78"/>
    </reaction>
</comment>
<comment type="pathway">
    <text evidence="1">Cofactor biosynthesis; riboflavin biosynthesis; riboflavin from 2-hydroxy-3-oxobutyl phosphate and 5-amino-6-(D-ribitylamino)uracil: step 1/2.</text>
</comment>
<comment type="similarity">
    <text evidence="1">Belongs to the DMRL synthase family.</text>
</comment>